<proteinExistence type="inferred from homology"/>
<feature type="chain" id="PRO_0000357438" description="Enolase-phosphatase E1">
    <location>
        <begin position="1"/>
        <end position="232"/>
    </location>
</feature>
<dbReference type="EC" id="3.1.3.77" evidence="1"/>
<dbReference type="EMBL" id="AE009442">
    <property type="protein sequence ID" value="AAO29109.1"/>
    <property type="molecule type" value="Genomic_DNA"/>
</dbReference>
<dbReference type="RefSeq" id="WP_004088321.1">
    <property type="nucleotide sequence ID" value="NC_004556.1"/>
</dbReference>
<dbReference type="SMR" id="Q87C36"/>
<dbReference type="GeneID" id="93905071"/>
<dbReference type="KEGG" id="xft:PD_1260"/>
<dbReference type="HOGENOM" id="CLU_023273_0_0_6"/>
<dbReference type="UniPathway" id="UPA00904">
    <property type="reaction ID" value="UER00876"/>
</dbReference>
<dbReference type="UniPathway" id="UPA00904">
    <property type="reaction ID" value="UER00877"/>
</dbReference>
<dbReference type="Proteomes" id="UP000002516">
    <property type="component" value="Chromosome"/>
</dbReference>
<dbReference type="GO" id="GO:0043715">
    <property type="term" value="F:2,3-diketo-5-methylthiopentyl-1-phosphate enolase activity"/>
    <property type="evidence" value="ECO:0007669"/>
    <property type="project" value="UniProtKB-UniRule"/>
</dbReference>
<dbReference type="GO" id="GO:0043716">
    <property type="term" value="F:2-hydroxy-3-keto-5-methylthiopentenyl-1-phosphate phosphatase activity"/>
    <property type="evidence" value="ECO:0007669"/>
    <property type="project" value="UniProtKB-UniRule"/>
</dbReference>
<dbReference type="GO" id="GO:0043874">
    <property type="term" value="F:acireductone synthase activity"/>
    <property type="evidence" value="ECO:0007669"/>
    <property type="project" value="UniProtKB-EC"/>
</dbReference>
<dbReference type="GO" id="GO:0000287">
    <property type="term" value="F:magnesium ion binding"/>
    <property type="evidence" value="ECO:0007669"/>
    <property type="project" value="UniProtKB-UniRule"/>
</dbReference>
<dbReference type="GO" id="GO:0019509">
    <property type="term" value="P:L-methionine salvage from methylthioadenosine"/>
    <property type="evidence" value="ECO:0007669"/>
    <property type="project" value="UniProtKB-UniRule"/>
</dbReference>
<dbReference type="CDD" id="cd01629">
    <property type="entry name" value="HAD_EP"/>
    <property type="match status" value="1"/>
</dbReference>
<dbReference type="Gene3D" id="1.10.720.60">
    <property type="match status" value="1"/>
</dbReference>
<dbReference type="Gene3D" id="3.40.50.1000">
    <property type="entry name" value="HAD superfamily/HAD-like"/>
    <property type="match status" value="1"/>
</dbReference>
<dbReference type="HAMAP" id="MF_01681">
    <property type="entry name" value="Salvage_MtnC"/>
    <property type="match status" value="1"/>
</dbReference>
<dbReference type="InterPro" id="IPR023943">
    <property type="entry name" value="Enolase-ppase_E1"/>
</dbReference>
<dbReference type="InterPro" id="IPR036412">
    <property type="entry name" value="HAD-like_sf"/>
</dbReference>
<dbReference type="InterPro" id="IPR006439">
    <property type="entry name" value="HAD-SF_hydro_IA"/>
</dbReference>
<dbReference type="InterPro" id="IPR023214">
    <property type="entry name" value="HAD_sf"/>
</dbReference>
<dbReference type="NCBIfam" id="TIGR01691">
    <property type="entry name" value="enolase-ppase"/>
    <property type="match status" value="1"/>
</dbReference>
<dbReference type="NCBIfam" id="TIGR01549">
    <property type="entry name" value="HAD-SF-IA-v1"/>
    <property type="match status" value="1"/>
</dbReference>
<dbReference type="PANTHER" id="PTHR20371">
    <property type="entry name" value="ENOLASE-PHOSPHATASE E1"/>
    <property type="match status" value="1"/>
</dbReference>
<dbReference type="PANTHER" id="PTHR20371:SF1">
    <property type="entry name" value="ENOLASE-PHOSPHATASE E1"/>
    <property type="match status" value="1"/>
</dbReference>
<dbReference type="Pfam" id="PF00702">
    <property type="entry name" value="Hydrolase"/>
    <property type="match status" value="1"/>
</dbReference>
<dbReference type="SFLD" id="SFLDG01129">
    <property type="entry name" value="C1.5:_HAD__Beta-PGM__Phosphata"/>
    <property type="match status" value="1"/>
</dbReference>
<dbReference type="SFLD" id="SFLDF00044">
    <property type="entry name" value="enolase-phosphatase"/>
    <property type="match status" value="1"/>
</dbReference>
<dbReference type="SUPFAM" id="SSF56784">
    <property type="entry name" value="HAD-like"/>
    <property type="match status" value="1"/>
</dbReference>
<protein>
    <recommendedName>
        <fullName evidence="1">Enolase-phosphatase E1</fullName>
        <ecNumber evidence="1">3.1.3.77</ecNumber>
    </recommendedName>
    <alternativeName>
        <fullName evidence="1">2,3-diketo-5-methylthio-1-phosphopentane phosphatase</fullName>
    </alternativeName>
</protein>
<reference key="1">
    <citation type="journal article" date="2003" name="J. Bacteriol.">
        <title>Comparative analyses of the complete genome sequences of Pierce's disease and citrus variegated chlorosis strains of Xylella fastidiosa.</title>
        <authorList>
            <person name="Van Sluys M.A."/>
            <person name="de Oliveira M.C."/>
            <person name="Monteiro-Vitorello C.B."/>
            <person name="Miyaki C.Y."/>
            <person name="Furlan L.R."/>
            <person name="Camargo L.E.A."/>
            <person name="da Silva A.C.R."/>
            <person name="Moon D.H."/>
            <person name="Takita M.A."/>
            <person name="Lemos E.G.M."/>
            <person name="Machado M.A."/>
            <person name="Ferro M.I.T."/>
            <person name="da Silva F.R."/>
            <person name="Goldman M.H.S."/>
            <person name="Goldman G.H."/>
            <person name="Lemos M.V.F."/>
            <person name="El-Dorry H."/>
            <person name="Tsai S.M."/>
            <person name="Carrer H."/>
            <person name="Carraro D.M."/>
            <person name="de Oliveira R.C."/>
            <person name="Nunes L.R."/>
            <person name="Siqueira W.J."/>
            <person name="Coutinho L.L."/>
            <person name="Kimura E.T."/>
            <person name="Ferro E.S."/>
            <person name="Harakava R."/>
            <person name="Kuramae E.E."/>
            <person name="Marino C.L."/>
            <person name="Giglioti E."/>
            <person name="Abreu I.L."/>
            <person name="Alves L.M.C."/>
            <person name="do Amaral A.M."/>
            <person name="Baia G.S."/>
            <person name="Blanco S.R."/>
            <person name="Brito M.S."/>
            <person name="Cannavan F.S."/>
            <person name="Celestino A.V."/>
            <person name="da Cunha A.F."/>
            <person name="Fenille R.C."/>
            <person name="Ferro J.A."/>
            <person name="Formighieri E.F."/>
            <person name="Kishi L.T."/>
            <person name="Leoni S.G."/>
            <person name="Oliveira A.R."/>
            <person name="Rosa V.E. Jr."/>
            <person name="Sassaki F.T."/>
            <person name="Sena J.A.D."/>
            <person name="de Souza A.A."/>
            <person name="Truffi D."/>
            <person name="Tsukumo F."/>
            <person name="Yanai G.M."/>
            <person name="Zaros L.G."/>
            <person name="Civerolo E.L."/>
            <person name="Simpson A.J.G."/>
            <person name="Almeida N.F. Jr."/>
            <person name="Setubal J.C."/>
            <person name="Kitajima J.P."/>
        </authorList>
    </citation>
    <scope>NUCLEOTIDE SEQUENCE [LARGE SCALE GENOMIC DNA]</scope>
    <source>
        <strain>Temecula1 / ATCC 700964</strain>
    </source>
</reference>
<organism>
    <name type="scientific">Xylella fastidiosa (strain Temecula1 / ATCC 700964)</name>
    <dbReference type="NCBI Taxonomy" id="183190"/>
    <lineage>
        <taxon>Bacteria</taxon>
        <taxon>Pseudomonadati</taxon>
        <taxon>Pseudomonadota</taxon>
        <taxon>Gammaproteobacteria</taxon>
        <taxon>Lysobacterales</taxon>
        <taxon>Lysobacteraceae</taxon>
        <taxon>Xylella</taxon>
    </lineage>
</organism>
<accession>Q87C36</accession>
<keyword id="KW-0028">Amino-acid biosynthesis</keyword>
<keyword id="KW-0378">Hydrolase</keyword>
<keyword id="KW-0460">Magnesium</keyword>
<keyword id="KW-0479">Metal-binding</keyword>
<keyword id="KW-0486">Methionine biosynthesis</keyword>
<keyword id="KW-1185">Reference proteome</keyword>
<name>MTNC_XYLFT</name>
<sequence length="232" mass="25992">MSMPQAILTDIEGTTSSLSFVKEVLFPYARRALPDFVREHREHPDVMPWLDQVANETGTAFSEEALVATLQTWIDTDSKHTALKALQGMIWTSGYQNGDFTAHLYPDAVQRLRAWHAANVPLYVYSSGSVPAQQLFFRHSHAGDLSGLFSGWFDTQIGGKRESTSYQRIAQHIGIAPAGIVFLSDVIEELNAAAQIGLNTVLIDRRDDYPTPRHLKDTDRHLHLDSFAQLPF</sequence>
<evidence type="ECO:0000255" key="1">
    <source>
        <dbReference type="HAMAP-Rule" id="MF_01681"/>
    </source>
</evidence>
<comment type="function">
    <text evidence="1">Bifunctional enzyme that catalyzes the enolization of 2,3-diketo-5-methylthiopentyl-1-phosphate (DK-MTP-1-P) into the intermediate 2-hydroxy-3-keto-5-methylthiopentenyl-1-phosphate (HK-MTPenyl-1-P), which is then dephosphorylated to form the acireductone 1,2-dihydroxy-3-keto-5-methylthiopentene (DHK-MTPene).</text>
</comment>
<comment type="catalytic activity">
    <reaction evidence="1">
        <text>5-methylsulfanyl-2,3-dioxopentyl phosphate + H2O = 1,2-dihydroxy-5-(methylsulfanyl)pent-1-en-3-one + phosphate</text>
        <dbReference type="Rhea" id="RHEA:21700"/>
        <dbReference type="ChEBI" id="CHEBI:15377"/>
        <dbReference type="ChEBI" id="CHEBI:43474"/>
        <dbReference type="ChEBI" id="CHEBI:49252"/>
        <dbReference type="ChEBI" id="CHEBI:58828"/>
        <dbReference type="EC" id="3.1.3.77"/>
    </reaction>
</comment>
<comment type="cofactor">
    <cofactor evidence="1">
        <name>Mg(2+)</name>
        <dbReference type="ChEBI" id="CHEBI:18420"/>
    </cofactor>
    <text evidence="1">Binds 1 Mg(2+) ion per subunit.</text>
</comment>
<comment type="pathway">
    <text evidence="1">Amino-acid biosynthesis; L-methionine biosynthesis via salvage pathway; L-methionine from S-methyl-5-thio-alpha-D-ribose 1-phosphate: step 3/6.</text>
</comment>
<comment type="pathway">
    <text evidence="1">Amino-acid biosynthesis; L-methionine biosynthesis via salvage pathway; L-methionine from S-methyl-5-thio-alpha-D-ribose 1-phosphate: step 4/6.</text>
</comment>
<comment type="subunit">
    <text evidence="1">Monomer.</text>
</comment>
<comment type="similarity">
    <text evidence="1">Belongs to the HAD-like hydrolase superfamily. MasA/MtnC family.</text>
</comment>
<gene>
    <name evidence="1" type="primary">mtnC</name>
    <name type="ordered locus">PD_1260</name>
</gene>